<accession>A6UYD9</accession>
<protein>
    <recommendedName>
        <fullName evidence="1">RNA pyrophosphohydrolase</fullName>
        <ecNumber evidence="1">3.6.1.-</ecNumber>
    </recommendedName>
    <alternativeName>
        <fullName evidence="1">(Di)nucleoside polyphosphate hydrolase</fullName>
    </alternativeName>
</protein>
<proteinExistence type="inferred from homology"/>
<comment type="function">
    <text evidence="1">Accelerates the degradation of transcripts by removing pyrophosphate from the 5'-end of triphosphorylated RNA, leading to a more labile monophosphorylated state that can stimulate subsequent ribonuclease cleavage.</text>
</comment>
<comment type="cofactor">
    <cofactor evidence="1">
        <name>a divalent metal cation</name>
        <dbReference type="ChEBI" id="CHEBI:60240"/>
    </cofactor>
</comment>
<comment type="similarity">
    <text evidence="1">Belongs to the Nudix hydrolase family. RppH subfamily.</text>
</comment>
<name>RPPH_PSEP7</name>
<reference key="1">
    <citation type="submission" date="2007-06" db="EMBL/GenBank/DDBJ databases">
        <authorList>
            <person name="Dodson R.J."/>
            <person name="Harkins D."/>
            <person name="Paulsen I.T."/>
        </authorList>
    </citation>
    <scope>NUCLEOTIDE SEQUENCE [LARGE SCALE GENOMIC DNA]</scope>
    <source>
        <strain>DSM 24068 / PA7</strain>
    </source>
</reference>
<sequence>MIDSDGFRPNVGIILANEAGQVLWARRINQEAWQFPQGGINDRETPEEALYRELNEEVGLEAGDVRILACTRGWLRYRLPQRLVRTHSQPLCIGQKQKWFLLRLMSDEARVRMDITSKPEFDGWRWVSYWYPLGQVVTFKREVYRRALKELAPRLLARD</sequence>
<evidence type="ECO:0000255" key="1">
    <source>
        <dbReference type="HAMAP-Rule" id="MF_00298"/>
    </source>
</evidence>
<keyword id="KW-0378">Hydrolase</keyword>
<organism>
    <name type="scientific">Pseudomonas paraeruginosa (strain DSM 24068 / PA7)</name>
    <name type="common">Pseudomonas aeruginosa (strain PA7)</name>
    <dbReference type="NCBI Taxonomy" id="381754"/>
    <lineage>
        <taxon>Bacteria</taxon>
        <taxon>Pseudomonadati</taxon>
        <taxon>Pseudomonadota</taxon>
        <taxon>Gammaproteobacteria</taxon>
        <taxon>Pseudomonadales</taxon>
        <taxon>Pseudomonadaceae</taxon>
        <taxon>Pseudomonas</taxon>
        <taxon>Pseudomonas paraeruginosa</taxon>
    </lineage>
</organism>
<gene>
    <name evidence="1" type="primary">rppH</name>
    <name evidence="1" type="synonym">nudH</name>
    <name type="ordered locus">PSPA7_0429</name>
</gene>
<dbReference type="EC" id="3.6.1.-" evidence="1"/>
<dbReference type="EMBL" id="CP000744">
    <property type="protein sequence ID" value="ABR85746.1"/>
    <property type="molecule type" value="Genomic_DNA"/>
</dbReference>
<dbReference type="RefSeq" id="WP_003084400.1">
    <property type="nucleotide sequence ID" value="NC_009656.1"/>
</dbReference>
<dbReference type="SMR" id="A6UYD9"/>
<dbReference type="KEGG" id="pap:PSPA7_0429"/>
<dbReference type="HOGENOM" id="CLU_087195_3_1_6"/>
<dbReference type="Proteomes" id="UP000001582">
    <property type="component" value="Chromosome"/>
</dbReference>
<dbReference type="GO" id="GO:0005737">
    <property type="term" value="C:cytoplasm"/>
    <property type="evidence" value="ECO:0007669"/>
    <property type="project" value="TreeGrafter"/>
</dbReference>
<dbReference type="GO" id="GO:0034353">
    <property type="term" value="F:mRNA 5'-diphosphatase activity"/>
    <property type="evidence" value="ECO:0007669"/>
    <property type="project" value="TreeGrafter"/>
</dbReference>
<dbReference type="GO" id="GO:0006402">
    <property type="term" value="P:mRNA catabolic process"/>
    <property type="evidence" value="ECO:0007669"/>
    <property type="project" value="TreeGrafter"/>
</dbReference>
<dbReference type="CDD" id="cd03671">
    <property type="entry name" value="NUDIX_Ap4A_hydrolase_plant_like"/>
    <property type="match status" value="1"/>
</dbReference>
<dbReference type="FunFam" id="3.90.79.10:FF:000001">
    <property type="entry name" value="RNA pyrophosphohydrolase"/>
    <property type="match status" value="1"/>
</dbReference>
<dbReference type="Gene3D" id="3.90.79.10">
    <property type="entry name" value="Nucleoside Triphosphate Pyrophosphohydrolase"/>
    <property type="match status" value="1"/>
</dbReference>
<dbReference type="HAMAP" id="MF_00298">
    <property type="entry name" value="Nudix_RppH"/>
    <property type="match status" value="1"/>
</dbReference>
<dbReference type="InterPro" id="IPR020476">
    <property type="entry name" value="Nudix_hydrolase"/>
</dbReference>
<dbReference type="InterPro" id="IPR015797">
    <property type="entry name" value="NUDIX_hydrolase-like_dom_sf"/>
</dbReference>
<dbReference type="InterPro" id="IPR020084">
    <property type="entry name" value="NUDIX_hydrolase_CS"/>
</dbReference>
<dbReference type="InterPro" id="IPR000086">
    <property type="entry name" value="NUDIX_hydrolase_dom"/>
</dbReference>
<dbReference type="InterPro" id="IPR022927">
    <property type="entry name" value="RppH"/>
</dbReference>
<dbReference type="NCBIfam" id="NF001934">
    <property type="entry name" value="PRK00714.1-1"/>
    <property type="match status" value="1"/>
</dbReference>
<dbReference type="NCBIfam" id="NF001937">
    <property type="entry name" value="PRK00714.1-4"/>
    <property type="match status" value="1"/>
</dbReference>
<dbReference type="NCBIfam" id="NF001938">
    <property type="entry name" value="PRK00714.1-5"/>
    <property type="match status" value="1"/>
</dbReference>
<dbReference type="PANTHER" id="PTHR23114">
    <property type="entry name" value="M7GPPPN-MRNA HYDROLASE"/>
    <property type="match status" value="1"/>
</dbReference>
<dbReference type="PANTHER" id="PTHR23114:SF17">
    <property type="entry name" value="M7GPPPN-MRNA HYDROLASE"/>
    <property type="match status" value="1"/>
</dbReference>
<dbReference type="Pfam" id="PF00293">
    <property type="entry name" value="NUDIX"/>
    <property type="match status" value="1"/>
</dbReference>
<dbReference type="PRINTS" id="PR00502">
    <property type="entry name" value="NUDIXFAMILY"/>
</dbReference>
<dbReference type="SUPFAM" id="SSF55811">
    <property type="entry name" value="Nudix"/>
    <property type="match status" value="1"/>
</dbReference>
<dbReference type="PROSITE" id="PS51462">
    <property type="entry name" value="NUDIX"/>
    <property type="match status" value="1"/>
</dbReference>
<dbReference type="PROSITE" id="PS00893">
    <property type="entry name" value="NUDIX_BOX"/>
    <property type="match status" value="1"/>
</dbReference>
<feature type="chain" id="PRO_1000021970" description="RNA pyrophosphohydrolase">
    <location>
        <begin position="1"/>
        <end position="159"/>
    </location>
</feature>
<feature type="domain" description="Nudix hydrolase" evidence="1">
    <location>
        <begin position="6"/>
        <end position="149"/>
    </location>
</feature>
<feature type="short sequence motif" description="Nudix box">
    <location>
        <begin position="38"/>
        <end position="59"/>
    </location>
</feature>